<protein>
    <recommendedName>
        <fullName evidence="1">Glutamine--tRNA ligase</fullName>
        <ecNumber evidence="1">6.1.1.18</ecNumber>
    </recommendedName>
    <alternativeName>
        <fullName evidence="1">Glutaminyl-tRNA synthetase</fullName>
        <shortName evidence="1">GlnRS</shortName>
    </alternativeName>
</protein>
<gene>
    <name evidence="1" type="primary">glnS</name>
    <name type="ordered locus">Ping_0492</name>
</gene>
<sequence length="553" mass="63197">MTQVDTAPSNFIRNIIDSDLQSGKHQVIHTRFPPEPNGYLHIGHAKSICLNFGLAEDYPNALCNLRFDDTNPVKEDADYVAAIEKDVRWLGFKWAGDIHYSSDYFEQLYDFAIELIKKDKAYVCALDAQQTREYRGSLMTVGKDSPFRNRPISESLDLFARMRAGEFAEGSMMLRAKIDMASPNMKMRDPVLYRIRFAHHHQTGDKWCIYPMYDFTHCISDALEGITHSLCTLEFEDHRPLYDWVLANISIACKPRQIEFSRLNLQYTLTSKRKLHTLIEEKIISAWDDPRMPTISGMRRRGYPAASIREFCKRIGVTKQENTVELASLEACVRENLEANAPRAMAVIDPVKVIISNYDENKTEKLIAAIHPKDESMGTRTVTFSREIFIDRADFREEANKKYKRLVLGKEVRLRNAYVIKADQVIKNDAGEITEIHCSYDPETLGNNPTDGRKVKGVIHWVSAVENQAAEFRIYEPLFLVENPAAAENIDEVLNPNALVIKHGFVESGLSDALAEKAYQFEREGYFCADNKDSSPERLVFNRTVALRDSWGG</sequence>
<evidence type="ECO:0000255" key="1">
    <source>
        <dbReference type="HAMAP-Rule" id="MF_00126"/>
    </source>
</evidence>
<comment type="catalytic activity">
    <reaction evidence="1">
        <text>tRNA(Gln) + L-glutamine + ATP = L-glutaminyl-tRNA(Gln) + AMP + diphosphate</text>
        <dbReference type="Rhea" id="RHEA:20121"/>
        <dbReference type="Rhea" id="RHEA-COMP:9662"/>
        <dbReference type="Rhea" id="RHEA-COMP:9681"/>
        <dbReference type="ChEBI" id="CHEBI:30616"/>
        <dbReference type="ChEBI" id="CHEBI:33019"/>
        <dbReference type="ChEBI" id="CHEBI:58359"/>
        <dbReference type="ChEBI" id="CHEBI:78442"/>
        <dbReference type="ChEBI" id="CHEBI:78521"/>
        <dbReference type="ChEBI" id="CHEBI:456215"/>
        <dbReference type="EC" id="6.1.1.18"/>
    </reaction>
</comment>
<comment type="subunit">
    <text evidence="1">Monomer.</text>
</comment>
<comment type="subcellular location">
    <subcellularLocation>
        <location evidence="1">Cytoplasm</location>
    </subcellularLocation>
</comment>
<comment type="similarity">
    <text evidence="1">Belongs to the class-I aminoacyl-tRNA synthetase family.</text>
</comment>
<name>SYQ_PSYIN</name>
<dbReference type="EC" id="6.1.1.18" evidence="1"/>
<dbReference type="EMBL" id="CP000510">
    <property type="protein sequence ID" value="ABM02348.1"/>
    <property type="molecule type" value="Genomic_DNA"/>
</dbReference>
<dbReference type="RefSeq" id="WP_011768907.1">
    <property type="nucleotide sequence ID" value="NC_008709.1"/>
</dbReference>
<dbReference type="SMR" id="A1SS83"/>
<dbReference type="STRING" id="357804.Ping_0492"/>
<dbReference type="KEGG" id="pin:Ping_0492"/>
<dbReference type="eggNOG" id="COG0008">
    <property type="taxonomic scope" value="Bacteria"/>
</dbReference>
<dbReference type="HOGENOM" id="CLU_001882_2_3_6"/>
<dbReference type="OrthoDB" id="9801560at2"/>
<dbReference type="Proteomes" id="UP000000639">
    <property type="component" value="Chromosome"/>
</dbReference>
<dbReference type="GO" id="GO:0005829">
    <property type="term" value="C:cytosol"/>
    <property type="evidence" value="ECO:0007669"/>
    <property type="project" value="TreeGrafter"/>
</dbReference>
<dbReference type="GO" id="GO:0005524">
    <property type="term" value="F:ATP binding"/>
    <property type="evidence" value="ECO:0007669"/>
    <property type="project" value="UniProtKB-UniRule"/>
</dbReference>
<dbReference type="GO" id="GO:0004819">
    <property type="term" value="F:glutamine-tRNA ligase activity"/>
    <property type="evidence" value="ECO:0007669"/>
    <property type="project" value="UniProtKB-UniRule"/>
</dbReference>
<dbReference type="GO" id="GO:0006425">
    <property type="term" value="P:glutaminyl-tRNA aminoacylation"/>
    <property type="evidence" value="ECO:0007669"/>
    <property type="project" value="InterPro"/>
</dbReference>
<dbReference type="GO" id="GO:0006424">
    <property type="term" value="P:glutamyl-tRNA aminoacylation"/>
    <property type="evidence" value="ECO:0007669"/>
    <property type="project" value="UniProtKB-UniRule"/>
</dbReference>
<dbReference type="CDD" id="cd00807">
    <property type="entry name" value="GlnRS_core"/>
    <property type="match status" value="1"/>
</dbReference>
<dbReference type="FunFam" id="1.10.1160.10:FF:000001">
    <property type="entry name" value="Glutamine--tRNA ligase"/>
    <property type="match status" value="1"/>
</dbReference>
<dbReference type="FunFam" id="2.40.240.10:FF:000001">
    <property type="entry name" value="Glutamine--tRNA ligase"/>
    <property type="match status" value="1"/>
</dbReference>
<dbReference type="FunFam" id="3.90.800.10:FF:000001">
    <property type="entry name" value="Glutamine--tRNA ligase"/>
    <property type="match status" value="1"/>
</dbReference>
<dbReference type="FunFam" id="3.40.50.620:FF:000037">
    <property type="entry name" value="Glutamine--tRNA ligase cytoplasmic"/>
    <property type="match status" value="1"/>
</dbReference>
<dbReference type="Gene3D" id="1.10.1160.10">
    <property type="entry name" value="Glutamyl-trna Synthetase, Domain 2"/>
    <property type="match status" value="1"/>
</dbReference>
<dbReference type="Gene3D" id="3.90.800.10">
    <property type="entry name" value="Glutamyl-tRNA Synthetase, Domain 3"/>
    <property type="match status" value="1"/>
</dbReference>
<dbReference type="Gene3D" id="3.40.50.620">
    <property type="entry name" value="HUPs"/>
    <property type="match status" value="1"/>
</dbReference>
<dbReference type="Gene3D" id="2.40.240.10">
    <property type="entry name" value="Ribosomal Protein L25, Chain P"/>
    <property type="match status" value="2"/>
</dbReference>
<dbReference type="HAMAP" id="MF_00126">
    <property type="entry name" value="Gln_tRNA_synth"/>
    <property type="match status" value="1"/>
</dbReference>
<dbReference type="InterPro" id="IPR001412">
    <property type="entry name" value="aa-tRNA-synth_I_CS"/>
</dbReference>
<dbReference type="InterPro" id="IPR004514">
    <property type="entry name" value="Gln-tRNA-synth"/>
</dbReference>
<dbReference type="InterPro" id="IPR050132">
    <property type="entry name" value="Gln/Glu-tRNA_Ligase"/>
</dbReference>
<dbReference type="InterPro" id="IPR022861">
    <property type="entry name" value="Gln_tRNA_ligase_bac"/>
</dbReference>
<dbReference type="InterPro" id="IPR000924">
    <property type="entry name" value="Glu/Gln-tRNA-synth"/>
</dbReference>
<dbReference type="InterPro" id="IPR020058">
    <property type="entry name" value="Glu/Gln-tRNA-synth_Ib_cat-dom"/>
</dbReference>
<dbReference type="InterPro" id="IPR020059">
    <property type="entry name" value="Glu/Gln-tRNA-synth_Ib_codon-bd"/>
</dbReference>
<dbReference type="InterPro" id="IPR020061">
    <property type="entry name" value="Glu_tRNA_lig_a-bdl"/>
</dbReference>
<dbReference type="InterPro" id="IPR020056">
    <property type="entry name" value="Rbsml_bL25/Gln-tRNA_synth_N"/>
</dbReference>
<dbReference type="InterPro" id="IPR011035">
    <property type="entry name" value="Ribosomal_bL25/Gln-tRNA_synth"/>
</dbReference>
<dbReference type="InterPro" id="IPR014729">
    <property type="entry name" value="Rossmann-like_a/b/a_fold"/>
</dbReference>
<dbReference type="InterPro" id="IPR049437">
    <property type="entry name" value="tRNA-synt_1c_C2"/>
</dbReference>
<dbReference type="NCBIfam" id="TIGR00440">
    <property type="entry name" value="glnS"/>
    <property type="match status" value="1"/>
</dbReference>
<dbReference type="NCBIfam" id="NF011291">
    <property type="entry name" value="PRK14703.1"/>
    <property type="match status" value="1"/>
</dbReference>
<dbReference type="PANTHER" id="PTHR43097:SF5">
    <property type="entry name" value="GLUTAMATE--TRNA LIGASE"/>
    <property type="match status" value="1"/>
</dbReference>
<dbReference type="PANTHER" id="PTHR43097">
    <property type="entry name" value="GLUTAMINE-TRNA LIGASE"/>
    <property type="match status" value="1"/>
</dbReference>
<dbReference type="Pfam" id="PF00749">
    <property type="entry name" value="tRNA-synt_1c"/>
    <property type="match status" value="1"/>
</dbReference>
<dbReference type="Pfam" id="PF03950">
    <property type="entry name" value="tRNA-synt_1c_C"/>
    <property type="match status" value="1"/>
</dbReference>
<dbReference type="Pfam" id="PF20974">
    <property type="entry name" value="tRNA-synt_1c_C2"/>
    <property type="match status" value="1"/>
</dbReference>
<dbReference type="PRINTS" id="PR00987">
    <property type="entry name" value="TRNASYNTHGLU"/>
</dbReference>
<dbReference type="SUPFAM" id="SSF52374">
    <property type="entry name" value="Nucleotidylyl transferase"/>
    <property type="match status" value="1"/>
</dbReference>
<dbReference type="SUPFAM" id="SSF50715">
    <property type="entry name" value="Ribosomal protein L25-like"/>
    <property type="match status" value="1"/>
</dbReference>
<dbReference type="PROSITE" id="PS00178">
    <property type="entry name" value="AA_TRNA_LIGASE_I"/>
    <property type="match status" value="1"/>
</dbReference>
<reference key="1">
    <citation type="journal article" date="2008" name="BMC Genomics">
        <title>Genomics of an extreme psychrophile, Psychromonas ingrahamii.</title>
        <authorList>
            <person name="Riley M."/>
            <person name="Staley J.T."/>
            <person name="Danchin A."/>
            <person name="Wang T.Z."/>
            <person name="Brettin T.S."/>
            <person name="Hauser L.J."/>
            <person name="Land M.L."/>
            <person name="Thompson L.S."/>
        </authorList>
    </citation>
    <scope>NUCLEOTIDE SEQUENCE [LARGE SCALE GENOMIC DNA]</scope>
    <source>
        <strain>DSM 17664 / CCUG 51855 / 37</strain>
    </source>
</reference>
<feature type="chain" id="PRO_1000095504" description="Glutamine--tRNA ligase">
    <location>
        <begin position="1"/>
        <end position="553"/>
    </location>
</feature>
<feature type="short sequence motif" description="'HIGH' region" evidence="1">
    <location>
        <begin position="34"/>
        <end position="44"/>
    </location>
</feature>
<feature type="short sequence motif" description="'KMSKS' region" evidence="1">
    <location>
        <begin position="269"/>
        <end position="273"/>
    </location>
</feature>
<feature type="binding site" evidence="1">
    <location>
        <begin position="35"/>
        <end position="37"/>
    </location>
    <ligand>
        <name>ATP</name>
        <dbReference type="ChEBI" id="CHEBI:30616"/>
    </ligand>
</feature>
<feature type="binding site" evidence="1">
    <location>
        <begin position="41"/>
        <end position="47"/>
    </location>
    <ligand>
        <name>ATP</name>
        <dbReference type="ChEBI" id="CHEBI:30616"/>
    </ligand>
</feature>
<feature type="binding site" evidence="1">
    <location>
        <position position="68"/>
    </location>
    <ligand>
        <name>L-glutamine</name>
        <dbReference type="ChEBI" id="CHEBI:58359"/>
    </ligand>
</feature>
<feature type="binding site" evidence="1">
    <location>
        <position position="213"/>
    </location>
    <ligand>
        <name>L-glutamine</name>
        <dbReference type="ChEBI" id="CHEBI:58359"/>
    </ligand>
</feature>
<feature type="binding site" evidence="1">
    <location>
        <position position="232"/>
    </location>
    <ligand>
        <name>ATP</name>
        <dbReference type="ChEBI" id="CHEBI:30616"/>
    </ligand>
</feature>
<feature type="binding site" evidence="1">
    <location>
        <begin position="262"/>
        <end position="263"/>
    </location>
    <ligand>
        <name>ATP</name>
        <dbReference type="ChEBI" id="CHEBI:30616"/>
    </ligand>
</feature>
<proteinExistence type="inferred from homology"/>
<organism>
    <name type="scientific">Psychromonas ingrahamii (strain DSM 17664 / CCUG 51855 / 37)</name>
    <dbReference type="NCBI Taxonomy" id="357804"/>
    <lineage>
        <taxon>Bacteria</taxon>
        <taxon>Pseudomonadati</taxon>
        <taxon>Pseudomonadota</taxon>
        <taxon>Gammaproteobacteria</taxon>
        <taxon>Alteromonadales</taxon>
        <taxon>Psychromonadaceae</taxon>
        <taxon>Psychromonas</taxon>
    </lineage>
</organism>
<accession>A1SS83</accession>
<keyword id="KW-0030">Aminoacyl-tRNA synthetase</keyword>
<keyword id="KW-0067">ATP-binding</keyword>
<keyword id="KW-0963">Cytoplasm</keyword>
<keyword id="KW-0436">Ligase</keyword>
<keyword id="KW-0547">Nucleotide-binding</keyword>
<keyword id="KW-0648">Protein biosynthesis</keyword>
<keyword id="KW-1185">Reference proteome</keyword>